<name>ENO_AROAE</name>
<sequence>MSAIVDIIAREILDSRGNPTVEADVLLESGVMGRAAVPSGASTGSREAIELRDGDAARYLGKGVLQAVENVNTEISETLIGLDAEEQAFIDRTLIELDGTENKSRLGANATLAVSMAIAKAAAEEAGLPLYRYFGGSGPMAMPVPMMNVINGGAHANNSLDIQECMIMPVSMTSFREALRCGAEIFHHLKKLTDKKGYPTTVGDEGGFAPNVGGTEEALNMIQDAIAAAGYEPGRDVLLALDCAASEFYKDGQYVLAGEGLTLSSEGFADYLATLADRFPIVSIEDGMAENDWAGWKTLTDKLGRRLQLVGDDLFVTNTRILEQGIDQGVANSILIKINQIGTLSETFAAVEMAKRAGYTAVISHRSGETEDSTIADIAVGLNAMQIKTGSLSRSDRISKYNQLLRIEEDLGDTVSYPGRRAFYNLRVR</sequence>
<gene>
    <name evidence="1" type="primary">eno</name>
    <name type="ordered locus">AZOSEA35200</name>
    <name type="ORF">ebA6162</name>
</gene>
<reference key="1">
    <citation type="journal article" date="2005" name="Arch. Microbiol.">
        <title>The genome sequence of an anaerobic aromatic-degrading denitrifying bacterium, strain EbN1.</title>
        <authorList>
            <person name="Rabus R."/>
            <person name="Kube M."/>
            <person name="Heider J."/>
            <person name="Beck A."/>
            <person name="Heitmann K."/>
            <person name="Widdel F."/>
            <person name="Reinhardt R."/>
        </authorList>
    </citation>
    <scope>NUCLEOTIDE SEQUENCE [LARGE SCALE GENOMIC DNA]</scope>
    <source>
        <strain>DSM 19018 / LMG 30748 / EbN1</strain>
    </source>
</reference>
<dbReference type="EC" id="4.2.1.11" evidence="1"/>
<dbReference type="EMBL" id="CR555306">
    <property type="protein sequence ID" value="CAI09645.1"/>
    <property type="molecule type" value="Genomic_DNA"/>
</dbReference>
<dbReference type="RefSeq" id="WP_011239304.1">
    <property type="nucleotide sequence ID" value="NC_006513.1"/>
</dbReference>
<dbReference type="SMR" id="Q5NZ69"/>
<dbReference type="STRING" id="76114.ebA6162"/>
<dbReference type="KEGG" id="eba:ebA6162"/>
<dbReference type="eggNOG" id="COG0148">
    <property type="taxonomic scope" value="Bacteria"/>
</dbReference>
<dbReference type="HOGENOM" id="CLU_031223_2_1_4"/>
<dbReference type="OrthoDB" id="9804716at2"/>
<dbReference type="UniPathway" id="UPA00109">
    <property type="reaction ID" value="UER00187"/>
</dbReference>
<dbReference type="Proteomes" id="UP000006552">
    <property type="component" value="Chromosome"/>
</dbReference>
<dbReference type="GO" id="GO:0009986">
    <property type="term" value="C:cell surface"/>
    <property type="evidence" value="ECO:0007669"/>
    <property type="project" value="UniProtKB-SubCell"/>
</dbReference>
<dbReference type="GO" id="GO:0005576">
    <property type="term" value="C:extracellular region"/>
    <property type="evidence" value="ECO:0007669"/>
    <property type="project" value="UniProtKB-SubCell"/>
</dbReference>
<dbReference type="GO" id="GO:0000015">
    <property type="term" value="C:phosphopyruvate hydratase complex"/>
    <property type="evidence" value="ECO:0007669"/>
    <property type="project" value="InterPro"/>
</dbReference>
<dbReference type="GO" id="GO:0000287">
    <property type="term" value="F:magnesium ion binding"/>
    <property type="evidence" value="ECO:0007669"/>
    <property type="project" value="UniProtKB-UniRule"/>
</dbReference>
<dbReference type="GO" id="GO:0004634">
    <property type="term" value="F:phosphopyruvate hydratase activity"/>
    <property type="evidence" value="ECO:0007669"/>
    <property type="project" value="UniProtKB-UniRule"/>
</dbReference>
<dbReference type="GO" id="GO:0006096">
    <property type="term" value="P:glycolytic process"/>
    <property type="evidence" value="ECO:0007669"/>
    <property type="project" value="UniProtKB-UniRule"/>
</dbReference>
<dbReference type="CDD" id="cd03313">
    <property type="entry name" value="enolase"/>
    <property type="match status" value="1"/>
</dbReference>
<dbReference type="FunFam" id="3.20.20.120:FF:000001">
    <property type="entry name" value="Enolase"/>
    <property type="match status" value="1"/>
</dbReference>
<dbReference type="FunFam" id="3.30.390.10:FF:000001">
    <property type="entry name" value="Enolase"/>
    <property type="match status" value="1"/>
</dbReference>
<dbReference type="Gene3D" id="3.20.20.120">
    <property type="entry name" value="Enolase-like C-terminal domain"/>
    <property type="match status" value="1"/>
</dbReference>
<dbReference type="Gene3D" id="3.30.390.10">
    <property type="entry name" value="Enolase-like, N-terminal domain"/>
    <property type="match status" value="1"/>
</dbReference>
<dbReference type="HAMAP" id="MF_00318">
    <property type="entry name" value="Enolase"/>
    <property type="match status" value="1"/>
</dbReference>
<dbReference type="InterPro" id="IPR000941">
    <property type="entry name" value="Enolase"/>
</dbReference>
<dbReference type="InterPro" id="IPR036849">
    <property type="entry name" value="Enolase-like_C_sf"/>
</dbReference>
<dbReference type="InterPro" id="IPR029017">
    <property type="entry name" value="Enolase-like_N"/>
</dbReference>
<dbReference type="InterPro" id="IPR020810">
    <property type="entry name" value="Enolase_C"/>
</dbReference>
<dbReference type="InterPro" id="IPR020809">
    <property type="entry name" value="Enolase_CS"/>
</dbReference>
<dbReference type="InterPro" id="IPR020811">
    <property type="entry name" value="Enolase_N"/>
</dbReference>
<dbReference type="NCBIfam" id="TIGR01060">
    <property type="entry name" value="eno"/>
    <property type="match status" value="1"/>
</dbReference>
<dbReference type="PANTHER" id="PTHR11902">
    <property type="entry name" value="ENOLASE"/>
    <property type="match status" value="1"/>
</dbReference>
<dbReference type="PANTHER" id="PTHR11902:SF1">
    <property type="entry name" value="ENOLASE"/>
    <property type="match status" value="1"/>
</dbReference>
<dbReference type="Pfam" id="PF00113">
    <property type="entry name" value="Enolase_C"/>
    <property type="match status" value="1"/>
</dbReference>
<dbReference type="Pfam" id="PF03952">
    <property type="entry name" value="Enolase_N"/>
    <property type="match status" value="1"/>
</dbReference>
<dbReference type="PIRSF" id="PIRSF001400">
    <property type="entry name" value="Enolase"/>
    <property type="match status" value="1"/>
</dbReference>
<dbReference type="PRINTS" id="PR00148">
    <property type="entry name" value="ENOLASE"/>
</dbReference>
<dbReference type="SFLD" id="SFLDS00001">
    <property type="entry name" value="Enolase"/>
    <property type="match status" value="1"/>
</dbReference>
<dbReference type="SFLD" id="SFLDF00002">
    <property type="entry name" value="enolase"/>
    <property type="match status" value="1"/>
</dbReference>
<dbReference type="SMART" id="SM01192">
    <property type="entry name" value="Enolase_C"/>
    <property type="match status" value="1"/>
</dbReference>
<dbReference type="SMART" id="SM01193">
    <property type="entry name" value="Enolase_N"/>
    <property type="match status" value="1"/>
</dbReference>
<dbReference type="SUPFAM" id="SSF51604">
    <property type="entry name" value="Enolase C-terminal domain-like"/>
    <property type="match status" value="1"/>
</dbReference>
<dbReference type="SUPFAM" id="SSF54826">
    <property type="entry name" value="Enolase N-terminal domain-like"/>
    <property type="match status" value="1"/>
</dbReference>
<dbReference type="PROSITE" id="PS00164">
    <property type="entry name" value="ENOLASE"/>
    <property type="match status" value="1"/>
</dbReference>
<proteinExistence type="inferred from homology"/>
<protein>
    <recommendedName>
        <fullName evidence="1">Enolase</fullName>
        <ecNumber evidence="1">4.2.1.11</ecNumber>
    </recommendedName>
    <alternativeName>
        <fullName evidence="1">2-phospho-D-glycerate hydro-lyase</fullName>
    </alternativeName>
    <alternativeName>
        <fullName evidence="1">2-phosphoglycerate dehydratase</fullName>
    </alternativeName>
</protein>
<feature type="chain" id="PRO_0000133832" description="Enolase">
    <location>
        <begin position="1"/>
        <end position="429"/>
    </location>
</feature>
<feature type="active site" description="Proton donor" evidence="1">
    <location>
        <position position="205"/>
    </location>
</feature>
<feature type="active site" description="Proton acceptor" evidence="1">
    <location>
        <position position="337"/>
    </location>
</feature>
<feature type="binding site" evidence="1">
    <location>
        <position position="163"/>
    </location>
    <ligand>
        <name>(2R)-2-phosphoglycerate</name>
        <dbReference type="ChEBI" id="CHEBI:58289"/>
    </ligand>
</feature>
<feature type="binding site" evidence="1">
    <location>
        <position position="242"/>
    </location>
    <ligand>
        <name>Mg(2+)</name>
        <dbReference type="ChEBI" id="CHEBI:18420"/>
    </ligand>
</feature>
<feature type="binding site" evidence="1">
    <location>
        <position position="285"/>
    </location>
    <ligand>
        <name>Mg(2+)</name>
        <dbReference type="ChEBI" id="CHEBI:18420"/>
    </ligand>
</feature>
<feature type="binding site" evidence="1">
    <location>
        <position position="312"/>
    </location>
    <ligand>
        <name>Mg(2+)</name>
        <dbReference type="ChEBI" id="CHEBI:18420"/>
    </ligand>
</feature>
<feature type="binding site" evidence="1">
    <location>
        <position position="337"/>
    </location>
    <ligand>
        <name>(2R)-2-phosphoglycerate</name>
        <dbReference type="ChEBI" id="CHEBI:58289"/>
    </ligand>
</feature>
<feature type="binding site" evidence="1">
    <location>
        <position position="366"/>
    </location>
    <ligand>
        <name>(2R)-2-phosphoglycerate</name>
        <dbReference type="ChEBI" id="CHEBI:58289"/>
    </ligand>
</feature>
<feature type="binding site" evidence="1">
    <location>
        <position position="367"/>
    </location>
    <ligand>
        <name>(2R)-2-phosphoglycerate</name>
        <dbReference type="ChEBI" id="CHEBI:58289"/>
    </ligand>
</feature>
<feature type="binding site" evidence="1">
    <location>
        <position position="388"/>
    </location>
    <ligand>
        <name>(2R)-2-phosphoglycerate</name>
        <dbReference type="ChEBI" id="CHEBI:58289"/>
    </ligand>
</feature>
<accession>Q5NZ69</accession>
<organism>
    <name type="scientific">Aromatoleum aromaticum (strain DSM 19018 / LMG 30748 / EbN1)</name>
    <name type="common">Azoarcus sp. (strain EbN1)</name>
    <dbReference type="NCBI Taxonomy" id="76114"/>
    <lineage>
        <taxon>Bacteria</taxon>
        <taxon>Pseudomonadati</taxon>
        <taxon>Pseudomonadota</taxon>
        <taxon>Betaproteobacteria</taxon>
        <taxon>Rhodocyclales</taxon>
        <taxon>Rhodocyclaceae</taxon>
        <taxon>Aromatoleum</taxon>
    </lineage>
</organism>
<keyword id="KW-0963">Cytoplasm</keyword>
<keyword id="KW-0324">Glycolysis</keyword>
<keyword id="KW-0456">Lyase</keyword>
<keyword id="KW-0460">Magnesium</keyword>
<keyword id="KW-0479">Metal-binding</keyword>
<keyword id="KW-1185">Reference proteome</keyword>
<keyword id="KW-0964">Secreted</keyword>
<comment type="function">
    <text evidence="1">Catalyzes the reversible conversion of 2-phosphoglycerate (2-PG) into phosphoenolpyruvate (PEP). It is essential for the degradation of carbohydrates via glycolysis.</text>
</comment>
<comment type="catalytic activity">
    <reaction evidence="1">
        <text>(2R)-2-phosphoglycerate = phosphoenolpyruvate + H2O</text>
        <dbReference type="Rhea" id="RHEA:10164"/>
        <dbReference type="ChEBI" id="CHEBI:15377"/>
        <dbReference type="ChEBI" id="CHEBI:58289"/>
        <dbReference type="ChEBI" id="CHEBI:58702"/>
        <dbReference type="EC" id="4.2.1.11"/>
    </reaction>
</comment>
<comment type="cofactor">
    <cofactor evidence="1">
        <name>Mg(2+)</name>
        <dbReference type="ChEBI" id="CHEBI:18420"/>
    </cofactor>
    <text evidence="1">Binds a second Mg(2+) ion via substrate during catalysis.</text>
</comment>
<comment type="pathway">
    <text evidence="1">Carbohydrate degradation; glycolysis; pyruvate from D-glyceraldehyde 3-phosphate: step 4/5.</text>
</comment>
<comment type="subcellular location">
    <subcellularLocation>
        <location evidence="1">Cytoplasm</location>
    </subcellularLocation>
    <subcellularLocation>
        <location evidence="1">Secreted</location>
    </subcellularLocation>
    <subcellularLocation>
        <location evidence="1">Cell surface</location>
    </subcellularLocation>
    <text evidence="1">Fractions of enolase are present in both the cytoplasm and on the cell surface.</text>
</comment>
<comment type="similarity">
    <text evidence="1">Belongs to the enolase family.</text>
</comment>
<evidence type="ECO:0000255" key="1">
    <source>
        <dbReference type="HAMAP-Rule" id="MF_00318"/>
    </source>
</evidence>